<feature type="chain" id="PRO_0000169537" description="DNA utilization protein HofP">
    <location>
        <begin position="1"/>
        <end position="134"/>
    </location>
</feature>
<feature type="region of interest" description="Disordered" evidence="1">
    <location>
        <begin position="95"/>
        <end position="134"/>
    </location>
</feature>
<feature type="compositionally biased region" description="Basic and acidic residues" evidence="1">
    <location>
        <begin position="109"/>
        <end position="134"/>
    </location>
</feature>
<organism>
    <name type="scientific">Escherichia coli (strain K12)</name>
    <dbReference type="NCBI Taxonomy" id="83333"/>
    <lineage>
        <taxon>Bacteria</taxon>
        <taxon>Pseudomonadati</taxon>
        <taxon>Pseudomonadota</taxon>
        <taxon>Gammaproteobacteria</taxon>
        <taxon>Enterobacterales</taxon>
        <taxon>Enterobacteriaceae</taxon>
        <taxon>Escherichia</taxon>
    </lineage>
</organism>
<keyword id="KW-1185">Reference proteome</keyword>
<gene>
    <name type="primary">hofP</name>
    <name type="synonym">yrfA</name>
    <name type="ordered locus">b3392</name>
    <name type="ordered locus">JW5694</name>
</gene>
<accession>P45750</accession>
<accession>Q2M757</accession>
<name>HOFP_ECOLI</name>
<reference key="1">
    <citation type="journal article" date="1997" name="Science">
        <title>The complete genome sequence of Escherichia coli K-12.</title>
        <authorList>
            <person name="Blattner F.R."/>
            <person name="Plunkett G. III"/>
            <person name="Bloch C.A."/>
            <person name="Perna N.T."/>
            <person name="Burland V."/>
            <person name="Riley M."/>
            <person name="Collado-Vides J."/>
            <person name="Glasner J.D."/>
            <person name="Rode C.K."/>
            <person name="Mayhew G.F."/>
            <person name="Gregor J."/>
            <person name="Davis N.W."/>
            <person name="Kirkpatrick H.A."/>
            <person name="Goeden M.A."/>
            <person name="Rose D.J."/>
            <person name="Mau B."/>
            <person name="Shao Y."/>
        </authorList>
    </citation>
    <scope>NUCLEOTIDE SEQUENCE [LARGE SCALE GENOMIC DNA]</scope>
    <source>
        <strain>K12 / MG1655 / ATCC 47076</strain>
    </source>
</reference>
<reference key="2">
    <citation type="journal article" date="2006" name="Mol. Syst. Biol.">
        <title>Highly accurate genome sequences of Escherichia coli K-12 strains MG1655 and W3110.</title>
        <authorList>
            <person name="Hayashi K."/>
            <person name="Morooka N."/>
            <person name="Yamamoto Y."/>
            <person name="Fujita K."/>
            <person name="Isono K."/>
            <person name="Choi S."/>
            <person name="Ohtsubo E."/>
            <person name="Baba T."/>
            <person name="Wanner B.L."/>
            <person name="Mori H."/>
            <person name="Horiuchi T."/>
        </authorList>
    </citation>
    <scope>NUCLEOTIDE SEQUENCE [LARGE SCALE GENOMIC DNA]</scope>
    <source>
        <strain>K12 / W3110 / ATCC 27325 / DSM 5911</strain>
    </source>
</reference>
<reference key="3">
    <citation type="journal article" date="2006" name="J. Bacteriol.">
        <title>Escherichia coli competence gene homologs are essential for competitive fitness and the use of DNA as a nutrient.</title>
        <authorList>
            <person name="Palchevskiy V."/>
            <person name="Finkel S.E."/>
        </authorList>
    </citation>
    <scope>FUNCTION</scope>
    <scope>DISRUPTION PHENOTYPE</scope>
    <source>
        <strain>K12 / W3110 / ZK126</strain>
    </source>
</reference>
<dbReference type="EMBL" id="U18997">
    <property type="protein sequence ID" value="AAA58189.1"/>
    <property type="status" value="ALT_INIT"/>
    <property type="molecule type" value="Genomic_DNA"/>
</dbReference>
<dbReference type="EMBL" id="U00096">
    <property type="protein sequence ID" value="AAC76417.2"/>
    <property type="molecule type" value="Genomic_DNA"/>
</dbReference>
<dbReference type="EMBL" id="AP009048">
    <property type="protein sequence ID" value="BAE77899.1"/>
    <property type="molecule type" value="Genomic_DNA"/>
</dbReference>
<dbReference type="PIR" id="C65134">
    <property type="entry name" value="C65134"/>
</dbReference>
<dbReference type="RefSeq" id="NP_417851.4">
    <property type="nucleotide sequence ID" value="NC_000913.3"/>
</dbReference>
<dbReference type="RefSeq" id="WP_001264141.1">
    <property type="nucleotide sequence ID" value="NZ_STEB01000004.1"/>
</dbReference>
<dbReference type="BioGRID" id="4261393">
    <property type="interactions" value="9"/>
</dbReference>
<dbReference type="FunCoup" id="P45750">
    <property type="interactions" value="6"/>
</dbReference>
<dbReference type="STRING" id="511145.b3392"/>
<dbReference type="PaxDb" id="511145-b3392"/>
<dbReference type="EnsemblBacteria" id="AAC76417">
    <property type="protein sequence ID" value="AAC76417"/>
    <property type="gene ID" value="b3392"/>
</dbReference>
<dbReference type="GeneID" id="75206330"/>
<dbReference type="GeneID" id="947900"/>
<dbReference type="KEGG" id="ecj:JW5694"/>
<dbReference type="KEGG" id="eco:b3392"/>
<dbReference type="KEGG" id="ecoc:C3026_18405"/>
<dbReference type="PATRIC" id="fig|1411691.4.peg.3338"/>
<dbReference type="EchoBASE" id="EB2758"/>
<dbReference type="eggNOG" id="ENOG50335JD">
    <property type="taxonomic scope" value="Bacteria"/>
</dbReference>
<dbReference type="HOGENOM" id="CLU_128670_0_0_6"/>
<dbReference type="InParanoid" id="P45750"/>
<dbReference type="OMA" id="QWRYQGI"/>
<dbReference type="OrthoDB" id="6562856at2"/>
<dbReference type="PhylomeDB" id="P45750"/>
<dbReference type="BioCyc" id="EcoCyc:G7736-MONOMER"/>
<dbReference type="PRO" id="PR:P45750"/>
<dbReference type="Proteomes" id="UP000000625">
    <property type="component" value="Chromosome"/>
</dbReference>
<dbReference type="GO" id="GO:0015976">
    <property type="term" value="P:carbon utilization"/>
    <property type="evidence" value="ECO:0000315"/>
    <property type="project" value="EcoCyc"/>
</dbReference>
<dbReference type="GO" id="GO:0006308">
    <property type="term" value="P:DNA catabolic process"/>
    <property type="evidence" value="ECO:0000315"/>
    <property type="project" value="EcoCyc"/>
</dbReference>
<dbReference type="InterPro" id="IPR019684">
    <property type="entry name" value="HofP"/>
</dbReference>
<dbReference type="Pfam" id="PF10748">
    <property type="entry name" value="HofP"/>
    <property type="match status" value="1"/>
</dbReference>
<protein>
    <recommendedName>
        <fullName>DNA utilization protein HofP</fullName>
    </recommendedName>
</protein>
<proteinExistence type="predicted"/>
<comment type="function">
    <text evidence="2">Required for the use of extracellular DNA as a nutrient.</text>
</comment>
<comment type="disruption phenotype">
    <text evidence="2">Mutants are unable to use DNA as a sole carbon and energy source and show decreased competitive fitness when cocultured with wild-type cells.</text>
</comment>
<comment type="sequence caution" evidence="3">
    <conflict type="erroneous initiation">
        <sequence resource="EMBL-CDS" id="AAA58189"/>
    </conflict>
    <text>Extended N-terminus.</text>
</comment>
<evidence type="ECO:0000256" key="1">
    <source>
        <dbReference type="SAM" id="MobiDB-lite"/>
    </source>
</evidence>
<evidence type="ECO:0000269" key="2">
    <source>
    </source>
</evidence>
<evidence type="ECO:0000305" key="3"/>
<sequence>MRVKRWLLAGIALCLLTGMRDPFKPPEDLCRISELSQWRYQGMVGRGERIIGVIKDGQKKWRRVQQNDVLENGWTILQLTPDVLTLGTGTNCEPPQWLWQRQGDTNEAMDSRTTVDADTRRTGGKAAKSDADGG</sequence>